<dbReference type="EC" id="3.6.5.4" evidence="1"/>
<dbReference type="EMBL" id="AE017285">
    <property type="protein sequence ID" value="AAS97530.1"/>
    <property type="molecule type" value="Genomic_DNA"/>
</dbReference>
<dbReference type="RefSeq" id="WP_010940318.1">
    <property type="nucleotide sequence ID" value="NC_002937.3"/>
</dbReference>
<dbReference type="RefSeq" id="YP_012270.1">
    <property type="nucleotide sequence ID" value="NC_002937.3"/>
</dbReference>
<dbReference type="SMR" id="Q726P7"/>
<dbReference type="STRING" id="882.DVU_3059"/>
<dbReference type="PaxDb" id="882-DVU_3059"/>
<dbReference type="EnsemblBacteria" id="AAS97530">
    <property type="protein sequence ID" value="AAS97530"/>
    <property type="gene ID" value="DVU_3059"/>
</dbReference>
<dbReference type="KEGG" id="dvu:DVU_3059"/>
<dbReference type="PATRIC" id="fig|882.5.peg.2775"/>
<dbReference type="eggNOG" id="COG0552">
    <property type="taxonomic scope" value="Bacteria"/>
</dbReference>
<dbReference type="HOGENOM" id="CLU_009301_10_1_7"/>
<dbReference type="OrthoDB" id="9804720at2"/>
<dbReference type="PhylomeDB" id="Q726P7"/>
<dbReference type="Proteomes" id="UP000002194">
    <property type="component" value="Chromosome"/>
</dbReference>
<dbReference type="GO" id="GO:0005737">
    <property type="term" value="C:cytoplasm"/>
    <property type="evidence" value="ECO:0007669"/>
    <property type="project" value="UniProtKB-SubCell"/>
</dbReference>
<dbReference type="GO" id="GO:0005886">
    <property type="term" value="C:plasma membrane"/>
    <property type="evidence" value="ECO:0007669"/>
    <property type="project" value="UniProtKB-SubCell"/>
</dbReference>
<dbReference type="GO" id="GO:0016887">
    <property type="term" value="F:ATP hydrolysis activity"/>
    <property type="evidence" value="ECO:0007669"/>
    <property type="project" value="InterPro"/>
</dbReference>
<dbReference type="GO" id="GO:0005525">
    <property type="term" value="F:GTP binding"/>
    <property type="evidence" value="ECO:0007669"/>
    <property type="project" value="UniProtKB-UniRule"/>
</dbReference>
<dbReference type="GO" id="GO:0003924">
    <property type="term" value="F:GTPase activity"/>
    <property type="evidence" value="ECO:0007669"/>
    <property type="project" value="UniProtKB-UniRule"/>
</dbReference>
<dbReference type="GO" id="GO:0005047">
    <property type="term" value="F:signal recognition particle binding"/>
    <property type="evidence" value="ECO:0007669"/>
    <property type="project" value="TreeGrafter"/>
</dbReference>
<dbReference type="GO" id="GO:0006614">
    <property type="term" value="P:SRP-dependent cotranslational protein targeting to membrane"/>
    <property type="evidence" value="ECO:0007669"/>
    <property type="project" value="InterPro"/>
</dbReference>
<dbReference type="CDD" id="cd17874">
    <property type="entry name" value="FtsY"/>
    <property type="match status" value="1"/>
</dbReference>
<dbReference type="FunFam" id="1.20.120.140:FF:000002">
    <property type="entry name" value="Signal recognition particle receptor FtsY"/>
    <property type="match status" value="1"/>
</dbReference>
<dbReference type="FunFam" id="3.40.50.300:FF:000053">
    <property type="entry name" value="Signal recognition particle receptor FtsY"/>
    <property type="match status" value="1"/>
</dbReference>
<dbReference type="Gene3D" id="3.40.50.300">
    <property type="entry name" value="P-loop containing nucleotide triphosphate hydrolases"/>
    <property type="match status" value="1"/>
</dbReference>
<dbReference type="Gene3D" id="1.20.120.140">
    <property type="entry name" value="Signal recognition particle SRP54, nucleotide-binding domain"/>
    <property type="match status" value="1"/>
</dbReference>
<dbReference type="HAMAP" id="MF_00920">
    <property type="entry name" value="FtsY"/>
    <property type="match status" value="1"/>
</dbReference>
<dbReference type="InterPro" id="IPR003593">
    <property type="entry name" value="AAA+_ATPase"/>
</dbReference>
<dbReference type="InterPro" id="IPR027417">
    <property type="entry name" value="P-loop_NTPase"/>
</dbReference>
<dbReference type="InterPro" id="IPR013822">
    <property type="entry name" value="Signal_recog_particl_SRP54_hlx"/>
</dbReference>
<dbReference type="InterPro" id="IPR004390">
    <property type="entry name" value="SR_rcpt_FtsY"/>
</dbReference>
<dbReference type="InterPro" id="IPR036225">
    <property type="entry name" value="SRP/SRP_N"/>
</dbReference>
<dbReference type="InterPro" id="IPR000897">
    <property type="entry name" value="SRP54_GTPase_dom"/>
</dbReference>
<dbReference type="InterPro" id="IPR042101">
    <property type="entry name" value="SRP54_N_sf"/>
</dbReference>
<dbReference type="NCBIfam" id="TIGR00064">
    <property type="entry name" value="ftsY"/>
    <property type="match status" value="1"/>
</dbReference>
<dbReference type="PANTHER" id="PTHR43134">
    <property type="entry name" value="SIGNAL RECOGNITION PARTICLE RECEPTOR SUBUNIT ALPHA"/>
    <property type="match status" value="1"/>
</dbReference>
<dbReference type="PANTHER" id="PTHR43134:SF1">
    <property type="entry name" value="SIGNAL RECOGNITION PARTICLE RECEPTOR SUBUNIT ALPHA"/>
    <property type="match status" value="1"/>
</dbReference>
<dbReference type="Pfam" id="PF00448">
    <property type="entry name" value="SRP54"/>
    <property type="match status" value="1"/>
</dbReference>
<dbReference type="Pfam" id="PF02881">
    <property type="entry name" value="SRP54_N"/>
    <property type="match status" value="1"/>
</dbReference>
<dbReference type="SMART" id="SM00382">
    <property type="entry name" value="AAA"/>
    <property type="match status" value="1"/>
</dbReference>
<dbReference type="SMART" id="SM00962">
    <property type="entry name" value="SRP54"/>
    <property type="match status" value="1"/>
</dbReference>
<dbReference type="SMART" id="SM00963">
    <property type="entry name" value="SRP54_N"/>
    <property type="match status" value="1"/>
</dbReference>
<dbReference type="SUPFAM" id="SSF47364">
    <property type="entry name" value="Domain of the SRP/SRP receptor G-proteins"/>
    <property type="match status" value="1"/>
</dbReference>
<dbReference type="SUPFAM" id="SSF52540">
    <property type="entry name" value="P-loop containing nucleoside triphosphate hydrolases"/>
    <property type="match status" value="1"/>
</dbReference>
<dbReference type="PROSITE" id="PS00300">
    <property type="entry name" value="SRP54"/>
    <property type="match status" value="1"/>
</dbReference>
<organism>
    <name type="scientific">Nitratidesulfovibrio vulgaris (strain ATCC 29579 / DSM 644 / CCUG 34227 / NCIMB 8303 / VKM B-1760 / Hildenborough)</name>
    <name type="common">Desulfovibrio vulgaris</name>
    <dbReference type="NCBI Taxonomy" id="882"/>
    <lineage>
        <taxon>Bacteria</taxon>
        <taxon>Pseudomonadati</taxon>
        <taxon>Thermodesulfobacteriota</taxon>
        <taxon>Desulfovibrionia</taxon>
        <taxon>Desulfovibrionales</taxon>
        <taxon>Desulfovibrionaceae</taxon>
        <taxon>Nitratidesulfovibrio</taxon>
    </lineage>
</organism>
<name>FTSY_NITV2</name>
<comment type="function">
    <text evidence="1">Involved in targeting and insertion of nascent membrane proteins into the cytoplasmic membrane. Acts as a receptor for the complex formed by the signal recognition particle (SRP) and the ribosome-nascent chain (RNC). Interaction with SRP-RNC leads to the transfer of the RNC complex to the Sec translocase for insertion into the membrane, the hydrolysis of GTP by both Ffh and FtsY, and the dissociation of the SRP-FtsY complex into the individual components.</text>
</comment>
<comment type="catalytic activity">
    <reaction evidence="1">
        <text>GTP + H2O = GDP + phosphate + H(+)</text>
        <dbReference type="Rhea" id="RHEA:19669"/>
        <dbReference type="ChEBI" id="CHEBI:15377"/>
        <dbReference type="ChEBI" id="CHEBI:15378"/>
        <dbReference type="ChEBI" id="CHEBI:37565"/>
        <dbReference type="ChEBI" id="CHEBI:43474"/>
        <dbReference type="ChEBI" id="CHEBI:58189"/>
        <dbReference type="EC" id="3.6.5.4"/>
    </reaction>
</comment>
<comment type="subunit">
    <text evidence="1">Part of the signal recognition particle protein translocation system, which is composed of SRP and FtsY. SRP is a ribonucleoprotein composed of Ffh and a 4.5S RNA molecule.</text>
</comment>
<comment type="subcellular location">
    <subcellularLocation>
        <location>Cell inner membrane</location>
        <topology>Peripheral membrane protein</topology>
        <orientation>Cytoplasmic side</orientation>
    </subcellularLocation>
    <subcellularLocation>
        <location evidence="1">Cytoplasm</location>
    </subcellularLocation>
</comment>
<comment type="similarity">
    <text evidence="1">Belongs to the GTP-binding SRP family. FtsY subfamily.</text>
</comment>
<proteinExistence type="inferred from homology"/>
<reference key="1">
    <citation type="journal article" date="2004" name="Nat. Biotechnol.">
        <title>The genome sequence of the anaerobic, sulfate-reducing bacterium Desulfovibrio vulgaris Hildenborough.</title>
        <authorList>
            <person name="Heidelberg J.F."/>
            <person name="Seshadri R."/>
            <person name="Haveman S.A."/>
            <person name="Hemme C.L."/>
            <person name="Paulsen I.T."/>
            <person name="Kolonay J.F."/>
            <person name="Eisen J.A."/>
            <person name="Ward N.L."/>
            <person name="Methe B.A."/>
            <person name="Brinkac L.M."/>
            <person name="Daugherty S.C."/>
            <person name="DeBoy R.T."/>
            <person name="Dodson R.J."/>
            <person name="Durkin A.S."/>
            <person name="Madupu R."/>
            <person name="Nelson W.C."/>
            <person name="Sullivan S.A."/>
            <person name="Fouts D.E."/>
            <person name="Haft D.H."/>
            <person name="Selengut J."/>
            <person name="Peterson J.D."/>
            <person name="Davidsen T.M."/>
            <person name="Zafar N."/>
            <person name="Zhou L."/>
            <person name="Radune D."/>
            <person name="Dimitrov G."/>
            <person name="Hance M."/>
            <person name="Tran K."/>
            <person name="Khouri H.M."/>
            <person name="Gill J."/>
            <person name="Utterback T.R."/>
            <person name="Feldblyum T.V."/>
            <person name="Wall J.D."/>
            <person name="Voordouw G."/>
            <person name="Fraser C.M."/>
        </authorList>
    </citation>
    <scope>NUCLEOTIDE SEQUENCE [LARGE SCALE GENOMIC DNA]</scope>
    <source>
        <strain>ATCC 29579 / DSM 644 / CCUG 34227 / NCIMB 8303 / VKM B-1760 / Hildenborough</strain>
    </source>
</reference>
<sequence length="488" mass="53118">MGFFSAIKRLWKGDTAPEDVSKPVEAEGSAIVGTSSTGSPVGTGAAMPAAQDAPSPAAPHAIATPDDAVPDDAVPDDAVHGGEAPWKTELTLALRQAEPRLSVWLGHVLDGVDEAGPILWERLRFFFSSLEVPADEAETFVRDFGRWLEAMEYRYVADFRSELQYRLALALDLEDEEDERSRLMLKLTEGLARTREQIGRRIDGLLASHGRIDEGFWEELEEILIMADVGFEPTTQLIGRLRERARKAGTDDPARFRELLREELEVIFRAPRRIAAVNPPEVVLLIGVNGVGKTTTIAKLAYRAQLQGRKVLIAAGDTFRAAAIEQLEIWAKRVGAGFYAKTAGADPAAVAYEAMDKAVSEGYDLLLVDTAGRLHTKANLMEELHKIRKVLGRKHPGAPHRSILVIDATTGQNALSQTKLFNEACGVDEIVLTKLDGTAKGGIVVAVAMQFGIPITYVGLGEKMEDMRPFNGSDFAMALLGVEEKPAA</sequence>
<protein>
    <recommendedName>
        <fullName evidence="1">Signal recognition particle receptor FtsY</fullName>
        <shortName evidence="1">SRP receptor</shortName>
        <ecNumber evidence="1">3.6.5.4</ecNumber>
    </recommendedName>
</protein>
<evidence type="ECO:0000255" key="1">
    <source>
        <dbReference type="HAMAP-Rule" id="MF_00920"/>
    </source>
</evidence>
<evidence type="ECO:0000256" key="2">
    <source>
        <dbReference type="SAM" id="MobiDB-lite"/>
    </source>
</evidence>
<feature type="chain" id="PRO_0000416701" description="Signal recognition particle receptor FtsY">
    <location>
        <begin position="1"/>
        <end position="488"/>
    </location>
</feature>
<feature type="region of interest" description="Disordered" evidence="2">
    <location>
        <begin position="14"/>
        <end position="82"/>
    </location>
</feature>
<feature type="compositionally biased region" description="Low complexity" evidence="2">
    <location>
        <begin position="32"/>
        <end position="67"/>
    </location>
</feature>
<feature type="binding site" evidence="1">
    <location>
        <begin position="287"/>
        <end position="294"/>
    </location>
    <ligand>
        <name>GTP</name>
        <dbReference type="ChEBI" id="CHEBI:37565"/>
    </ligand>
</feature>
<feature type="binding site" evidence="1">
    <location>
        <begin position="369"/>
        <end position="373"/>
    </location>
    <ligand>
        <name>GTP</name>
        <dbReference type="ChEBI" id="CHEBI:37565"/>
    </ligand>
</feature>
<feature type="binding site" evidence="1">
    <location>
        <begin position="433"/>
        <end position="436"/>
    </location>
    <ligand>
        <name>GTP</name>
        <dbReference type="ChEBI" id="CHEBI:37565"/>
    </ligand>
</feature>
<accession>Q726P7</accession>
<keyword id="KW-0997">Cell inner membrane</keyword>
<keyword id="KW-1003">Cell membrane</keyword>
<keyword id="KW-0963">Cytoplasm</keyword>
<keyword id="KW-0342">GTP-binding</keyword>
<keyword id="KW-0378">Hydrolase</keyword>
<keyword id="KW-0472">Membrane</keyword>
<keyword id="KW-0547">Nucleotide-binding</keyword>
<keyword id="KW-0675">Receptor</keyword>
<keyword id="KW-1185">Reference proteome</keyword>
<gene>
    <name evidence="1" type="primary">ftsY</name>
    <name type="ordered locus">DVU_3059</name>
</gene>